<name>TIM10_YEAST</name>
<accession>P87108</accession>
<accession>D3DKU9</accession>
<evidence type="ECO:0000269" key="1">
    <source>
    </source>
</evidence>
<evidence type="ECO:0000269" key="2">
    <source>
    </source>
</evidence>
<evidence type="ECO:0000269" key="3">
    <source>
    </source>
</evidence>
<evidence type="ECO:0000269" key="4">
    <source>
    </source>
</evidence>
<evidence type="ECO:0000269" key="5">
    <source>
    </source>
</evidence>
<evidence type="ECO:0000269" key="6">
    <source>
    </source>
</evidence>
<evidence type="ECO:0000269" key="7">
    <source>
    </source>
</evidence>
<evidence type="ECO:0000269" key="8">
    <source>
    </source>
</evidence>
<evidence type="ECO:0000269" key="9">
    <source>
    </source>
</evidence>
<evidence type="ECO:0000269" key="10">
    <source>
    </source>
</evidence>
<evidence type="ECO:0000269" key="11">
    <source>
    </source>
</evidence>
<evidence type="ECO:0000269" key="12">
    <source>
    </source>
</evidence>
<evidence type="ECO:0000269" key="13">
    <source>
    </source>
</evidence>
<evidence type="ECO:0000269" key="14">
    <source>
    </source>
</evidence>
<evidence type="ECO:0000269" key="15">
    <source>
    </source>
</evidence>
<evidence type="ECO:0000269" key="16">
    <source>
    </source>
</evidence>
<evidence type="ECO:0000269" key="17">
    <source>
    </source>
</evidence>
<evidence type="ECO:0000269" key="18">
    <source>
    </source>
</evidence>
<evidence type="ECO:0000269" key="19">
    <source>
    </source>
</evidence>
<evidence type="ECO:0000269" key="20">
    <source>
    </source>
</evidence>
<evidence type="ECO:0000305" key="21"/>
<evidence type="ECO:0007829" key="22">
    <source>
        <dbReference type="PDB" id="3DXR"/>
    </source>
</evidence>
<proteinExistence type="evidence at protein level"/>
<gene>
    <name type="primary">TIM10</name>
    <name type="synonym">MRS11</name>
    <name type="ordered locus">YHR005C-A</name>
    <name type="ORF">YHR005BC</name>
</gene>
<organism>
    <name type="scientific">Saccharomyces cerevisiae (strain ATCC 204508 / S288c)</name>
    <name type="common">Baker's yeast</name>
    <dbReference type="NCBI Taxonomy" id="559292"/>
    <lineage>
        <taxon>Eukaryota</taxon>
        <taxon>Fungi</taxon>
        <taxon>Dikarya</taxon>
        <taxon>Ascomycota</taxon>
        <taxon>Saccharomycotina</taxon>
        <taxon>Saccharomycetes</taxon>
        <taxon>Saccharomycetales</taxon>
        <taxon>Saccharomycetaceae</taxon>
        <taxon>Saccharomyces</taxon>
    </lineage>
</organism>
<feature type="chain" id="PRO_0000193622" description="Mitochondrial import inner membrane translocase subunit TIM10">
    <location>
        <begin position="1"/>
        <end position="93"/>
    </location>
</feature>
<feature type="region of interest" description="Interaction with transmembrane regions of transmembrane proteins in transit">
    <location>
        <begin position="1"/>
        <end position="31"/>
    </location>
</feature>
<feature type="region of interest" description="Required for heterohexamerization">
    <location>
        <begin position="73"/>
        <end position="93"/>
    </location>
</feature>
<feature type="short sequence motif" description="Twin CX3C motif">
    <location>
        <begin position="40"/>
        <end position="65"/>
    </location>
</feature>
<feature type="disulfide bond" evidence="5 9 10 11">
    <location>
        <begin position="40"/>
        <end position="65"/>
    </location>
</feature>
<feature type="disulfide bond" evidence="5 9 10 11">
    <location>
        <begin position="44"/>
        <end position="61"/>
    </location>
</feature>
<feature type="mutagenesis site" description="Induces impairment in folding and loss of zinc-binding." evidence="9 10">
    <original>C</original>
    <variation>S</variation>
    <location>
        <position position="40"/>
    </location>
</feature>
<feature type="mutagenesis site" description="Loss of function due to severely affected folding and the presence of non-native disulfide bonds; loss of zinc-binding." evidence="9 10">
    <original>C</original>
    <variation>S</variation>
    <location>
        <position position="44"/>
    </location>
</feature>
<feature type="mutagenesis site" description="Loss of function due to severely affected folding and the presence of non-native disulfide bonds; loss of zinc-binding." evidence="9 10">
    <original>C</original>
    <variation>S</variation>
    <location>
        <position position="61"/>
    </location>
</feature>
<feature type="mutagenesis site" description="Induces impairment in folding and loss of zinc-binding." evidence="9 10">
    <original>C</original>
    <variation>S</variation>
    <location>
        <position position="65"/>
    </location>
</feature>
<feature type="turn" evidence="22">
    <location>
        <begin position="16"/>
        <end position="19"/>
    </location>
</feature>
<feature type="helix" evidence="22">
    <location>
        <begin position="20"/>
        <end position="44"/>
    </location>
</feature>
<feature type="helix" evidence="22">
    <location>
        <begin position="56"/>
        <end position="82"/>
    </location>
</feature>
<reference key="1">
    <citation type="journal article" date="1997" name="Mol. Gen. Genet.">
        <title>A soluble 12-kDa protein of the mitochondrial intermembrane space, Mrs11p, is essential for mitochondrial biogenesis and viability of yeast cells.</title>
        <authorList>
            <person name="Jarosch E."/>
            <person name="Rodel G."/>
            <person name="Schweyen R.J."/>
        </authorList>
    </citation>
    <scope>NUCLEOTIDE SEQUENCE [GENOMIC DNA]</scope>
    <scope>SUBCELLULAR LOCATION</scope>
    <source>
        <strain>ATCC 44774 / DBY747</strain>
    </source>
</reference>
<reference key="2">
    <citation type="journal article" date="1994" name="Science">
        <title>Complete nucleotide sequence of Saccharomyces cerevisiae chromosome VIII.</title>
        <authorList>
            <person name="Johnston M."/>
            <person name="Andrews S."/>
            <person name="Brinkman R."/>
            <person name="Cooper J."/>
            <person name="Ding H."/>
            <person name="Dover J."/>
            <person name="Du Z."/>
            <person name="Favello A."/>
            <person name="Fulton L."/>
            <person name="Gattung S."/>
            <person name="Geisel C."/>
            <person name="Kirsten J."/>
            <person name="Kucaba T."/>
            <person name="Hillier L.W."/>
            <person name="Jier M."/>
            <person name="Johnston L."/>
            <person name="Langston Y."/>
            <person name="Latreille P."/>
            <person name="Louis E.J."/>
            <person name="Macri C."/>
            <person name="Mardis E."/>
            <person name="Menezes S."/>
            <person name="Mouser L."/>
            <person name="Nhan M."/>
            <person name="Rifkin L."/>
            <person name="Riles L."/>
            <person name="St Peter H."/>
            <person name="Trevaskis E."/>
            <person name="Vaughan K."/>
            <person name="Vignati D."/>
            <person name="Wilcox L."/>
            <person name="Wohldman P."/>
            <person name="Waterston R."/>
            <person name="Wilson R."/>
            <person name="Vaudin M."/>
        </authorList>
    </citation>
    <scope>NUCLEOTIDE SEQUENCE [LARGE SCALE GENOMIC DNA]</scope>
    <source>
        <strain>ATCC 204508 / S288c</strain>
    </source>
</reference>
<reference key="3">
    <citation type="journal article" date="2014" name="G3 (Bethesda)">
        <title>The reference genome sequence of Saccharomyces cerevisiae: Then and now.</title>
        <authorList>
            <person name="Engel S.R."/>
            <person name="Dietrich F.S."/>
            <person name="Fisk D.G."/>
            <person name="Binkley G."/>
            <person name="Balakrishnan R."/>
            <person name="Costanzo M.C."/>
            <person name="Dwight S.S."/>
            <person name="Hitz B.C."/>
            <person name="Karra K."/>
            <person name="Nash R.S."/>
            <person name="Weng S."/>
            <person name="Wong E.D."/>
            <person name="Lloyd P."/>
            <person name="Skrzypek M.S."/>
            <person name="Miyasato S.R."/>
            <person name="Simison M."/>
            <person name="Cherry J.M."/>
        </authorList>
    </citation>
    <scope>GENOME REANNOTATION</scope>
    <source>
        <strain>ATCC 204508 / S288c</strain>
    </source>
</reference>
<reference key="4">
    <citation type="journal article" date="1998" name="EMBO J.">
        <title>Tim9p, an essential partner subunit of Tim10p for the import of mitochondrial carrier proteins.</title>
        <authorList>
            <person name="Koehler C.M."/>
            <person name="Merchant S."/>
            <person name="Oppliger W."/>
            <person name="Schmid K."/>
            <person name="Jarosch E."/>
            <person name="Dolfini L."/>
            <person name="Junne T."/>
            <person name="Schatz G."/>
            <person name="Tokatlidis K."/>
        </authorList>
    </citation>
    <scope>PARTIAL PROTEIN SEQUENCE</scope>
    <scope>FUNCTION</scope>
    <scope>SUBUNIT</scope>
</reference>
<reference key="5">
    <citation type="journal article" date="2004" name="J. Biol. Chem.">
        <title>The structural basis of the TIM10 chaperone assembly.</title>
        <authorList>
            <person name="Lu H."/>
            <person name="Golovanov A.P."/>
            <person name="Alcock F."/>
            <person name="Grossmann J.G."/>
            <person name="Allen S."/>
            <person name="Lian L.-Y."/>
            <person name="Tokatlidis K."/>
        </authorList>
    </citation>
    <scope>PARTIAL PROTEIN SEQUENCE</scope>
    <scope>DISULFIDE BONDS</scope>
    <scope>ZINC-BINDING WHEN PRESENT IN THE CYTOSOL</scope>
    <scope>MUTAGENESIS OF CYS-40; CYS-44; CYS-61 AND CYS-65</scope>
</reference>
<reference key="6">
    <citation type="journal article" date="1996" name="Nature">
        <title>Import of carrier proteins into the mitochondrial inner membrane mediated by Tim22.</title>
        <authorList>
            <person name="Sirrenberg C."/>
            <person name="Bauer M.D."/>
            <person name="Guiard B."/>
            <person name="Neupert W."/>
            <person name="Brunner M."/>
        </authorList>
    </citation>
    <scope>FUNCTION</scope>
    <scope>ZINC-BINDING</scope>
    <scope>SUBCELLULAR LOCATION</scope>
    <scope>INTERACTION WITH TIM12 AND TIM22</scope>
</reference>
<reference key="7">
    <citation type="journal article" date="1998" name="Science">
        <title>Import of mitochondrial carriers mediated by essential proteins of the intermembrane space.</title>
        <authorList>
            <person name="Koehler C.M."/>
            <person name="Jarosch E."/>
            <person name="Tokatlidis K."/>
            <person name="Schmid K."/>
            <person name="Schweyen R.J."/>
            <person name="Schatz G."/>
        </authorList>
    </citation>
    <scope>FUNCTION</scope>
    <scope>INTERACTION WITH TIM12 AND TIM22</scope>
</reference>
<reference key="8">
    <citation type="journal article" date="1999" name="EMBO J.">
        <title>Tim9, a new component of the TIM22.54 translocase in mitochondria.</title>
        <authorList>
            <person name="Adam A."/>
            <person name="Endres M."/>
            <person name="Sirrenberg C."/>
            <person name="Lottspeich F."/>
            <person name="Neupert W."/>
            <person name="Brunner M."/>
        </authorList>
    </citation>
    <scope>FUNCTION</scope>
    <scope>SUBUNIT</scope>
    <scope>SUBCELLULAR LOCATION</scope>
    <scope>INTERACTION WITH TIM9 AND TIM12</scope>
</reference>
<reference key="9">
    <citation type="journal article" date="1999" name="EMBO J.">
        <title>Transport of the ADP/ATP carrier of mitochondria from the TOM complex to the TIM22.54 complex.</title>
        <authorList>
            <person name="Endres M."/>
            <person name="Neupert W."/>
            <person name="Brunner M."/>
        </authorList>
    </citation>
    <scope>FUNCTION</scope>
</reference>
<reference key="10">
    <citation type="journal article" date="2000" name="J. Cell Biol.">
        <title>Two intermembrane space TIM complexes interact with different domains of Tim23p during its import into mitochondria.</title>
        <authorList>
            <person name="Davis A.J."/>
            <person name="Sepuri N.B."/>
            <person name="Holder J."/>
            <person name="Johnson A.E."/>
            <person name="Jensen R.E."/>
        </authorList>
    </citation>
    <scope>FUNCTION</scope>
</reference>
<reference key="11">
    <citation type="journal article" date="2001" name="EMBO J.">
        <title>Functional reconstitution of the import of the yeast ADP/ATP carrier mediated by the TIM10 complex.</title>
        <authorList>
            <person name="Luciano P."/>
            <person name="Vial S."/>
            <person name="Vergnolle M.A.S."/>
            <person name="Dyall S.D."/>
            <person name="Robinson D.R."/>
            <person name="Tokatlidis K."/>
        </authorList>
    </citation>
    <scope>FUNCTION</scope>
</reference>
<reference key="12">
    <citation type="journal article" date="2001" name="Mol. Cell. Biol.">
        <title>The essential function of the small Tim proteins in the TIM22 import pathway does not depend on formation of the soluble 70-kilodalton complex.</title>
        <authorList>
            <person name="Murphy M.P."/>
            <person name="Leuenberger D."/>
            <person name="Curran S.P."/>
            <person name="Oppliger W."/>
            <person name="Koehler C.M."/>
        </authorList>
    </citation>
    <scope>FUNCTION</scope>
</reference>
<reference key="13">
    <citation type="journal article" date="2002" name="EMBO J.">
        <title>The Tim9p-Tim10p complex binds to the transmembrane domains of the ADP/ATP carrier.</title>
        <authorList>
            <person name="Curran S.P."/>
            <person name="Leuenberger D."/>
            <person name="Oppliger W."/>
            <person name="Koehler C.M."/>
        </authorList>
    </citation>
    <scope>SUBUNIT</scope>
    <scope>DISULFIDE BONDS</scope>
    <scope>LACK OF ZINC-BINDING WHEN PRESENT IN THE MITOCHONDRIAL INTERMEMBRANE SPACE</scope>
</reference>
<reference key="14">
    <citation type="journal article" date="2002" name="J. Biol. Chem.">
        <title>Assembly of Tim9 and Tim10 into a functional chaperone.</title>
        <authorList>
            <person name="Vial S."/>
            <person name="Lu H."/>
            <person name="Allen S."/>
            <person name="Savory P."/>
            <person name="Thornton D."/>
            <person name="Sheehan J."/>
            <person name="Tokatlidis K."/>
        </authorList>
    </citation>
    <scope>FUNCTION</scope>
    <scope>SUBUNIT</scope>
</reference>
<reference key="15">
    <citation type="journal article" date="2002" name="Mol. Cell. Biol.">
        <title>Mitochondrial import of the ADP/ATP carrier: the essential TIM complex of the intermembrane space is required for precursor release from the TOM complex.</title>
        <authorList>
            <person name="Truscott K.N."/>
            <person name="Wiedemann N."/>
            <person name="Rehling P."/>
            <person name="Mueller H."/>
            <person name="Meisinger C."/>
            <person name="Pfanner N."/>
            <person name="Guiard B."/>
        </authorList>
    </citation>
    <scope>FUNCTION</scope>
</reference>
<reference key="16">
    <citation type="journal article" date="2003" name="Science">
        <title>Protein insertion into the mitochondrial inner membrane by a twin-pore translocase.</title>
        <authorList>
            <person name="Rehling P."/>
            <person name="Model K."/>
            <person name="Brandner K."/>
            <person name="Kovermann P."/>
            <person name="Sickmann A."/>
            <person name="Meyer H.E."/>
            <person name="Kuehlbrandt W."/>
            <person name="Wagner R."/>
            <person name="Truscott K.N."/>
            <person name="Pfanner N."/>
        </authorList>
    </citation>
    <scope>FUNCTION</scope>
    <scope>IDENTIFICATION IN THE TIM22 COMPLEX WITH TIM12; TIM18; TIM22 AND TIM54</scope>
</reference>
<reference key="17">
    <citation type="journal article" date="2003" name="Science">
        <authorList>
            <person name="Rehling P."/>
            <person name="Model K."/>
            <person name="Brandner K."/>
            <person name="Kovermann P."/>
            <person name="Sickmann A."/>
            <person name="Meyer H.E."/>
            <person name="Kuehlbrandt W."/>
            <person name="Wagner R."/>
            <person name="Truscott K.N."/>
            <person name="Pfanner N."/>
        </authorList>
    </citation>
    <scope>ERRATUM OF PUBMED:12637749</scope>
</reference>
<reference key="18">
    <citation type="journal article" date="2003" name="J. Biol. Chem.">
        <title>Juxtaposition of the two distal CX3C motifs via intrachain disulfide bonding is essential for the folding of Tim10.</title>
        <authorList>
            <person name="Allen S."/>
            <person name="Lu H."/>
            <person name="Thornton D."/>
            <person name="Tokatlidis K."/>
        </authorList>
    </citation>
    <scope>DISULFIDE BONDS</scope>
    <scope>MUTAGENESIS OF CYS-40; CYS-44; CYS-61 AND CYS-65</scope>
</reference>
<reference key="19">
    <citation type="journal article" date="2004" name="J. Biol. Chem.">
        <title>Biogenesis of the protein import channel Tom40 of the mitochondrial outer membrane: intermembrane space components are involved in an early stage of the assembly pathway.</title>
        <authorList>
            <person name="Wiedemann N."/>
            <person name="Truscott K.N."/>
            <person name="Pfannschmidt S."/>
            <person name="Guiard B."/>
            <person name="Meisinger C."/>
            <person name="Pfanner N."/>
        </authorList>
    </citation>
    <scope>FUNCTION IN TRANSFER OF BETA-BARREL PROTEINS</scope>
</reference>
<reference key="20">
    <citation type="journal article" date="2004" name="J. Biol. Chem.">
        <title>Functional TIM10 chaperone assembly is redox-regulated in vivo.</title>
        <authorList>
            <person name="Lu H."/>
            <person name="Allen S."/>
            <person name="Wardleworth L."/>
            <person name="Savory P."/>
            <person name="Tokatlidis K."/>
        </authorList>
    </citation>
    <scope>DISULFIDE BONDS</scope>
</reference>
<reference key="21">
    <citation type="journal article" date="2005" name="J. Mol. Biol.">
        <title>Distinct domains of small Tims involved in subunit interaction and substrate recognition.</title>
        <authorList>
            <person name="Vergnolle M.A.S."/>
            <person name="Baud C."/>
            <person name="Golovanov A.P."/>
            <person name="Alcock F."/>
            <person name="Luciano P."/>
            <person name="Lian L.-Y."/>
            <person name="Tokatlidis K."/>
        </authorList>
    </citation>
    <scope>FUNCTION</scope>
</reference>
<reference key="22">
    <citation type="journal article" date="2005" name="J. Mol. Biol.">
        <title>Zinc binding stabilizes mitochondrial Tim10 in a reduced and import-competent state kinetically.</title>
        <authorList>
            <person name="Lu H."/>
            <person name="Woodburn J."/>
        </authorList>
    </citation>
    <scope>ZINC-BINDING</scope>
</reference>
<reference key="23">
    <citation type="journal article" date="2006" name="J. Proteome Res.">
        <title>Toward the complete yeast mitochondrial proteome: multidimensional separation techniques for mitochondrial proteomics.</title>
        <authorList>
            <person name="Reinders J."/>
            <person name="Zahedi R.P."/>
            <person name="Pfanner N."/>
            <person name="Meisinger C."/>
            <person name="Sickmann A."/>
        </authorList>
    </citation>
    <scope>SUBCELLULAR LOCATION [LARGE SCALE ANALYSIS]</scope>
    <scope>IDENTIFICATION BY MASS SPECTROMETRY</scope>
</reference>
<reference key="24">
    <citation type="journal article" date="2012" name="Mol. Cell. Proteomics">
        <title>Intermembrane space proteome of yeast mitochondria.</title>
        <authorList>
            <person name="Voegtle F.N."/>
            <person name="Burkhart J.M."/>
            <person name="Rao S."/>
            <person name="Gerbeth C."/>
            <person name="Hinrichs J."/>
            <person name="Martinou J.C."/>
            <person name="Chacinska A."/>
            <person name="Sickmann A."/>
            <person name="Zahedi R.P."/>
            <person name="Meisinger C."/>
        </authorList>
    </citation>
    <scope>IDENTIFICATION BY MASS SPECTROMETRY</scope>
    <scope>SUBCELLULAR LOCATION [LARGE SCALE ANALYSIS]</scope>
</reference>
<dbReference type="EMBL" id="Z80875">
    <property type="protein sequence ID" value="CAB02581.1"/>
    <property type="molecule type" value="Genomic_DNA"/>
</dbReference>
<dbReference type="EMBL" id="U10555">
    <property type="protein sequence ID" value="AAB68435.1"/>
    <property type="molecule type" value="Genomic_DNA"/>
</dbReference>
<dbReference type="EMBL" id="BK006934">
    <property type="protein sequence ID" value="DAA06693.1"/>
    <property type="molecule type" value="Genomic_DNA"/>
</dbReference>
<dbReference type="PIR" id="S72314">
    <property type="entry name" value="S72314"/>
</dbReference>
<dbReference type="RefSeq" id="NP_011869.1">
    <property type="nucleotide sequence ID" value="NM_001181427.1"/>
</dbReference>
<dbReference type="PDB" id="3DXR">
    <property type="method" value="X-ray"/>
    <property type="resolution" value="2.50 A"/>
    <property type="chains" value="B=1-93"/>
</dbReference>
<dbReference type="PDB" id="6LO8">
    <property type="method" value="EM"/>
    <property type="resolution" value="3.83 A"/>
    <property type="chains" value="H/J=1-93"/>
</dbReference>
<dbReference type="PDBsum" id="3DXR"/>
<dbReference type="PDBsum" id="6LO8"/>
<dbReference type="EMDB" id="EMD-0935"/>
<dbReference type="SASBDB" id="P87108"/>
<dbReference type="SMR" id="P87108"/>
<dbReference type="BioGRID" id="36431">
    <property type="interactions" value="38"/>
</dbReference>
<dbReference type="ComplexPortal" id="CPX-1629">
    <property type="entry name" value="TIM22 mitochondrial inner membrane twin-pore carrier translocase complex"/>
</dbReference>
<dbReference type="ComplexPortal" id="CPX-2268">
    <property type="entry name" value="TIM9-TIM10 mitochondrial intermembrane space protein transporter complex"/>
</dbReference>
<dbReference type="ComplexPortal" id="CPX-2950">
    <property type="entry name" value="TIM9-TIM10-TIM12 mitochondrial intermembrane space protein transporter complex"/>
</dbReference>
<dbReference type="DIP" id="DIP-1141N"/>
<dbReference type="FunCoup" id="P87108">
    <property type="interactions" value="851"/>
</dbReference>
<dbReference type="IntAct" id="P87108">
    <property type="interactions" value="6"/>
</dbReference>
<dbReference type="MINT" id="P87108"/>
<dbReference type="STRING" id="4932.YHR005C-A"/>
<dbReference type="BindingDB" id="P87108"/>
<dbReference type="ChEMBL" id="CHEMBL1741194"/>
<dbReference type="TCDB" id="3.A.8.1.1">
    <property type="family name" value="the mitochondrial protein translocase (mpt) family"/>
</dbReference>
<dbReference type="iPTMnet" id="P87108"/>
<dbReference type="PaxDb" id="4932-YHR005C-A"/>
<dbReference type="PeptideAtlas" id="P87108"/>
<dbReference type="EnsemblFungi" id="YHR005C-A_mRNA">
    <property type="protein sequence ID" value="YHR005C-A"/>
    <property type="gene ID" value="YHR005C-A"/>
</dbReference>
<dbReference type="GeneID" id="856395"/>
<dbReference type="KEGG" id="sce:YHR005C-A"/>
<dbReference type="AGR" id="SGD:S000003530"/>
<dbReference type="SGD" id="S000003530">
    <property type="gene designation" value="TIM10"/>
</dbReference>
<dbReference type="VEuPathDB" id="FungiDB:YHR005C-A"/>
<dbReference type="eggNOG" id="KOG3480">
    <property type="taxonomic scope" value="Eukaryota"/>
</dbReference>
<dbReference type="GeneTree" id="ENSGT00390000003068"/>
<dbReference type="HOGENOM" id="CLU_162151_1_0_1"/>
<dbReference type="InParanoid" id="P87108"/>
<dbReference type="OMA" id="VGENMQK"/>
<dbReference type="OrthoDB" id="274922at2759"/>
<dbReference type="BioCyc" id="YEAST:G3O-31244-MONOMER"/>
<dbReference type="Reactome" id="R-SCE-1268020">
    <property type="pathway name" value="Mitochondrial protein import"/>
</dbReference>
<dbReference type="EvolutionaryTrace" id="P87108"/>
<dbReference type="PRO" id="PR:P87108"/>
<dbReference type="Proteomes" id="UP000002311">
    <property type="component" value="Chromosome VIII"/>
</dbReference>
<dbReference type="RNAct" id="P87108">
    <property type="molecule type" value="protein"/>
</dbReference>
<dbReference type="GO" id="GO:0005743">
    <property type="term" value="C:mitochondrial inner membrane"/>
    <property type="evidence" value="ECO:0000314"/>
    <property type="project" value="ComplexPortal"/>
</dbReference>
<dbReference type="GO" id="GO:0005758">
    <property type="term" value="C:mitochondrial intermembrane space"/>
    <property type="evidence" value="ECO:0000314"/>
    <property type="project" value="ComplexPortal"/>
</dbReference>
<dbReference type="GO" id="GO:0042719">
    <property type="term" value="C:mitochondrial intermembrane space protein transporter complex"/>
    <property type="evidence" value="ECO:0000314"/>
    <property type="project" value="SGD"/>
</dbReference>
<dbReference type="GO" id="GO:0005739">
    <property type="term" value="C:mitochondrion"/>
    <property type="evidence" value="ECO:0000314"/>
    <property type="project" value="ComplexPortal"/>
</dbReference>
<dbReference type="GO" id="GO:0042721">
    <property type="term" value="C:TIM22 mitochondrial import inner membrane insertion complex"/>
    <property type="evidence" value="ECO:0000353"/>
    <property type="project" value="ComplexPortal"/>
</dbReference>
<dbReference type="GO" id="GO:0046872">
    <property type="term" value="F:metal ion binding"/>
    <property type="evidence" value="ECO:0007669"/>
    <property type="project" value="UniProtKB-KW"/>
</dbReference>
<dbReference type="GO" id="GO:0140318">
    <property type="term" value="F:protein transporter activity"/>
    <property type="evidence" value="ECO:0000314"/>
    <property type="project" value="SGD"/>
</dbReference>
<dbReference type="GO" id="GO:0051082">
    <property type="term" value="F:unfolded protein binding"/>
    <property type="evidence" value="ECO:0000314"/>
    <property type="project" value="SGD"/>
</dbReference>
<dbReference type="GO" id="GO:0045039">
    <property type="term" value="P:protein insertion into mitochondrial inner membrane"/>
    <property type="evidence" value="ECO:0000314"/>
    <property type="project" value="ComplexPortal"/>
</dbReference>
<dbReference type="FunFam" id="1.10.287.810:FF:000002">
    <property type="entry name" value="Mitochondrial import inner membrane translocase subunit tim10"/>
    <property type="match status" value="1"/>
</dbReference>
<dbReference type="Gene3D" id="1.10.287.810">
    <property type="entry name" value="Mitochondrial import inner membrane translocase subunit tim13 like domains"/>
    <property type="match status" value="1"/>
</dbReference>
<dbReference type="InterPro" id="IPR004217">
    <property type="entry name" value="Tim10-like"/>
</dbReference>
<dbReference type="InterPro" id="IPR035427">
    <property type="entry name" value="Tim10-like_dom_sf"/>
</dbReference>
<dbReference type="PANTHER" id="PTHR11038">
    <property type="entry name" value="MITOCHONDRIAL IMPORT INNER MEMBRANE TRANSLOCASE SUBUNIT TIM10"/>
    <property type="match status" value="1"/>
</dbReference>
<dbReference type="PANTHER" id="PTHR11038:SF16">
    <property type="entry name" value="MITOCHONDRIAL IMPORT INNER MEMBRANE TRANSLOCASE SUBUNIT TIM10"/>
    <property type="match status" value="1"/>
</dbReference>
<dbReference type="Pfam" id="PF02953">
    <property type="entry name" value="zf-Tim10_DDP"/>
    <property type="match status" value="1"/>
</dbReference>
<dbReference type="SUPFAM" id="SSF144122">
    <property type="entry name" value="Tim10-like"/>
    <property type="match status" value="1"/>
</dbReference>
<keyword id="KW-0002">3D-structure</keyword>
<keyword id="KW-0143">Chaperone</keyword>
<keyword id="KW-0903">Direct protein sequencing</keyword>
<keyword id="KW-1015">Disulfide bond</keyword>
<keyword id="KW-0472">Membrane</keyword>
<keyword id="KW-0479">Metal-binding</keyword>
<keyword id="KW-0496">Mitochondrion</keyword>
<keyword id="KW-0999">Mitochondrion inner membrane</keyword>
<keyword id="KW-0653">Protein transport</keyword>
<keyword id="KW-1185">Reference proteome</keyword>
<keyword id="KW-0811">Translocation</keyword>
<keyword id="KW-0813">Transport</keyword>
<keyword id="KW-0862">Zinc</keyword>
<comment type="function">
    <text evidence="1 2 3 4 6 7 8 12 13 16 18 19 20">Mitochondrial intermembrane chaperone that participates in the import and insertion of multi-pass transmembrane proteins into the mitochondrial inner membrane. Also required for the transfer of beta-barrel precursors from the TOM complex to the sorting and assembly machinery (SAM complex) of the outer membrane. Acts as a chaperone-like protein that protects the hydrophobic precursors from aggregation and guide them through the mitochondrial intermembrane space. Compared to TIM9, it may function as a substrate sensor.</text>
</comment>
<comment type="subunit">
    <text evidence="5 6 8 16 18 19 20">Heterohexamer; composed of 3 copies of TIM9 and 3 copies of TIM10, named soluble 70 kDa complex. Associates directly with the TIM12 component of the TIM22 complex, whose core is composed of TIM18, TIM22 and TIM54. Interacts with the transmembrane regions of multi-pass transmembrane proteins in transit.</text>
</comment>
<comment type="interaction">
    <interactant intactId="EBI-9115">
        <id>P87108</id>
    </interactant>
    <interactant intactId="EBI-11303">
        <id>P32830</id>
        <label>TIM12</label>
    </interactant>
    <organismsDiffer>false</organismsDiffer>
    <experiments>3</experiments>
</comment>
<comment type="interaction">
    <interactant intactId="EBI-9115">
        <id>P87108</id>
    </interactant>
    <interactant intactId="EBI-30499">
        <id>Q08749</id>
        <label>TIM18</label>
    </interactant>
    <organismsDiffer>false</organismsDiffer>
    <experiments>2</experiments>
</comment>
<comment type="interaction">
    <interactant intactId="EBI-9115">
        <id>P87108</id>
    </interactant>
    <interactant intactId="EBI-9108">
        <id>O74700</id>
        <label>TIM9</label>
    </interactant>
    <organismsDiffer>false</organismsDiffer>
    <experiments>7</experiments>
</comment>
<comment type="subcellular location">
    <subcellularLocation>
        <location evidence="14 16 17 20">Mitochondrion inner membrane</location>
        <topology evidence="14 16 17 20">Peripheral membrane protein</topology>
        <orientation evidence="14 16 17 20">Intermembrane side</orientation>
    </subcellularLocation>
    <subcellularLocation>
        <location evidence="15">Mitochondrion intermembrane space</location>
    </subcellularLocation>
</comment>
<comment type="domain">
    <text evidence="9">The twin CX3C motif contains 4 conserved Cys residues that form 2 disulfide bonds in the mitochondrial intermembrane space. However, during the transit of TIM10 from cytoplasm into mitochondrion, the Cys residues probably coordinate zinc, thereby preventing folding and allowing its transfer across mitochondrial outer membrane.</text>
</comment>
<comment type="similarity">
    <text evidence="21">Belongs to the small Tim family.</text>
</comment>
<protein>
    <recommendedName>
        <fullName>Mitochondrial import inner membrane translocase subunit TIM10</fullName>
    </recommendedName>
    <alternativeName>
        <fullName>Mitochondrial intermembrane protein MRS11</fullName>
    </alternativeName>
</protein>
<sequence>MSFLGFGGGQPQLSSQQKIQAAEAELDLVTDMFNKLVNNCYKKCINTSYSEGELNKNESSCLDRCVAKYFETNVQVGENMQKMGQSFNAAGKF</sequence>